<evidence type="ECO:0000255" key="1">
    <source>
        <dbReference type="HAMAP-Rule" id="MF_00071"/>
    </source>
</evidence>
<organism>
    <name type="scientific">Ureaplasma parvum serovar 3 (strain ATCC 700970)</name>
    <dbReference type="NCBI Taxonomy" id="273119"/>
    <lineage>
        <taxon>Bacteria</taxon>
        <taxon>Bacillati</taxon>
        <taxon>Mycoplasmatota</taxon>
        <taxon>Mycoplasmoidales</taxon>
        <taxon>Mycoplasmoidaceae</taxon>
        <taxon>Ureaplasma</taxon>
    </lineage>
</organism>
<dbReference type="EC" id="3.6.5.n1" evidence="1"/>
<dbReference type="EMBL" id="AF222894">
    <property type="protein sequence ID" value="AAF30733.1"/>
    <property type="molecule type" value="Genomic_DNA"/>
</dbReference>
<dbReference type="RefSeq" id="WP_006688644.1">
    <property type="nucleotide sequence ID" value="NC_002162.1"/>
</dbReference>
<dbReference type="SMR" id="Q9PQG7"/>
<dbReference type="STRING" id="273119.UU324"/>
<dbReference type="EnsemblBacteria" id="AAF30733">
    <property type="protein sequence ID" value="AAF30733"/>
    <property type="gene ID" value="UU324"/>
</dbReference>
<dbReference type="GeneID" id="29672470"/>
<dbReference type="KEGG" id="uur:UU324"/>
<dbReference type="eggNOG" id="COG0481">
    <property type="taxonomic scope" value="Bacteria"/>
</dbReference>
<dbReference type="HOGENOM" id="CLU_009995_3_3_14"/>
<dbReference type="OrthoDB" id="9804431at2"/>
<dbReference type="Proteomes" id="UP000000423">
    <property type="component" value="Chromosome"/>
</dbReference>
<dbReference type="GO" id="GO:0005886">
    <property type="term" value="C:plasma membrane"/>
    <property type="evidence" value="ECO:0007669"/>
    <property type="project" value="UniProtKB-SubCell"/>
</dbReference>
<dbReference type="GO" id="GO:0005525">
    <property type="term" value="F:GTP binding"/>
    <property type="evidence" value="ECO:0007669"/>
    <property type="project" value="UniProtKB-UniRule"/>
</dbReference>
<dbReference type="GO" id="GO:0003924">
    <property type="term" value="F:GTPase activity"/>
    <property type="evidence" value="ECO:0007669"/>
    <property type="project" value="UniProtKB-UniRule"/>
</dbReference>
<dbReference type="GO" id="GO:0043022">
    <property type="term" value="F:ribosome binding"/>
    <property type="evidence" value="ECO:0007669"/>
    <property type="project" value="UniProtKB-UniRule"/>
</dbReference>
<dbReference type="GO" id="GO:0003746">
    <property type="term" value="F:translation elongation factor activity"/>
    <property type="evidence" value="ECO:0007669"/>
    <property type="project" value="UniProtKB-UniRule"/>
</dbReference>
<dbReference type="GO" id="GO:0045727">
    <property type="term" value="P:positive regulation of translation"/>
    <property type="evidence" value="ECO:0007669"/>
    <property type="project" value="UniProtKB-UniRule"/>
</dbReference>
<dbReference type="CDD" id="cd03699">
    <property type="entry name" value="EF4_II"/>
    <property type="match status" value="1"/>
</dbReference>
<dbReference type="CDD" id="cd16260">
    <property type="entry name" value="EF4_III"/>
    <property type="match status" value="1"/>
</dbReference>
<dbReference type="CDD" id="cd01890">
    <property type="entry name" value="LepA"/>
    <property type="match status" value="1"/>
</dbReference>
<dbReference type="CDD" id="cd03709">
    <property type="entry name" value="lepA_C"/>
    <property type="match status" value="1"/>
</dbReference>
<dbReference type="FunFam" id="3.40.50.300:FF:000078">
    <property type="entry name" value="Elongation factor 4"/>
    <property type="match status" value="1"/>
</dbReference>
<dbReference type="FunFam" id="2.40.30.10:FF:000015">
    <property type="entry name" value="Translation factor GUF1, mitochondrial"/>
    <property type="match status" value="1"/>
</dbReference>
<dbReference type="FunFam" id="3.30.70.240:FF:000007">
    <property type="entry name" value="Translation factor GUF1, mitochondrial"/>
    <property type="match status" value="1"/>
</dbReference>
<dbReference type="FunFam" id="3.30.70.2570:FF:000001">
    <property type="entry name" value="Translation factor GUF1, mitochondrial"/>
    <property type="match status" value="1"/>
</dbReference>
<dbReference type="FunFam" id="3.30.70.870:FF:000004">
    <property type="entry name" value="Translation factor GUF1, mitochondrial"/>
    <property type="match status" value="1"/>
</dbReference>
<dbReference type="Gene3D" id="3.30.70.240">
    <property type="match status" value="1"/>
</dbReference>
<dbReference type="Gene3D" id="3.30.70.2570">
    <property type="entry name" value="Elongation factor 4, C-terminal domain"/>
    <property type="match status" value="1"/>
</dbReference>
<dbReference type="Gene3D" id="3.30.70.870">
    <property type="entry name" value="Elongation Factor G (Translational Gtpase), domain 3"/>
    <property type="match status" value="1"/>
</dbReference>
<dbReference type="Gene3D" id="3.40.50.300">
    <property type="entry name" value="P-loop containing nucleotide triphosphate hydrolases"/>
    <property type="match status" value="1"/>
</dbReference>
<dbReference type="Gene3D" id="2.40.30.10">
    <property type="entry name" value="Translation factors"/>
    <property type="match status" value="1"/>
</dbReference>
<dbReference type="HAMAP" id="MF_00071">
    <property type="entry name" value="LepA"/>
    <property type="match status" value="1"/>
</dbReference>
<dbReference type="InterPro" id="IPR006297">
    <property type="entry name" value="EF-4"/>
</dbReference>
<dbReference type="InterPro" id="IPR035647">
    <property type="entry name" value="EFG_III/V"/>
</dbReference>
<dbReference type="InterPro" id="IPR000640">
    <property type="entry name" value="EFG_V-like"/>
</dbReference>
<dbReference type="InterPro" id="IPR004161">
    <property type="entry name" value="EFTu-like_2"/>
</dbReference>
<dbReference type="InterPro" id="IPR031157">
    <property type="entry name" value="G_TR_CS"/>
</dbReference>
<dbReference type="InterPro" id="IPR038363">
    <property type="entry name" value="LepA_C_sf"/>
</dbReference>
<dbReference type="InterPro" id="IPR013842">
    <property type="entry name" value="LepA_CTD"/>
</dbReference>
<dbReference type="InterPro" id="IPR035654">
    <property type="entry name" value="LepA_IV"/>
</dbReference>
<dbReference type="InterPro" id="IPR027417">
    <property type="entry name" value="P-loop_NTPase"/>
</dbReference>
<dbReference type="InterPro" id="IPR005225">
    <property type="entry name" value="Small_GTP-bd"/>
</dbReference>
<dbReference type="InterPro" id="IPR000795">
    <property type="entry name" value="T_Tr_GTP-bd_dom"/>
</dbReference>
<dbReference type="InterPro" id="IPR009000">
    <property type="entry name" value="Transl_B-barrel_sf"/>
</dbReference>
<dbReference type="NCBIfam" id="TIGR01393">
    <property type="entry name" value="lepA"/>
    <property type="match status" value="1"/>
</dbReference>
<dbReference type="NCBIfam" id="TIGR00231">
    <property type="entry name" value="small_GTP"/>
    <property type="match status" value="1"/>
</dbReference>
<dbReference type="PANTHER" id="PTHR43512:SF4">
    <property type="entry name" value="TRANSLATION FACTOR GUF1 HOMOLOG, CHLOROPLASTIC"/>
    <property type="match status" value="1"/>
</dbReference>
<dbReference type="PANTHER" id="PTHR43512">
    <property type="entry name" value="TRANSLATION FACTOR GUF1-RELATED"/>
    <property type="match status" value="1"/>
</dbReference>
<dbReference type="Pfam" id="PF00679">
    <property type="entry name" value="EFG_C"/>
    <property type="match status" value="1"/>
</dbReference>
<dbReference type="Pfam" id="PF00009">
    <property type="entry name" value="GTP_EFTU"/>
    <property type="match status" value="1"/>
</dbReference>
<dbReference type="Pfam" id="PF03144">
    <property type="entry name" value="GTP_EFTU_D2"/>
    <property type="match status" value="1"/>
</dbReference>
<dbReference type="Pfam" id="PF06421">
    <property type="entry name" value="LepA_C"/>
    <property type="match status" value="1"/>
</dbReference>
<dbReference type="PRINTS" id="PR00315">
    <property type="entry name" value="ELONGATNFCT"/>
</dbReference>
<dbReference type="SMART" id="SM00838">
    <property type="entry name" value="EFG_C"/>
    <property type="match status" value="1"/>
</dbReference>
<dbReference type="SUPFAM" id="SSF54980">
    <property type="entry name" value="EF-G C-terminal domain-like"/>
    <property type="match status" value="2"/>
</dbReference>
<dbReference type="SUPFAM" id="SSF52540">
    <property type="entry name" value="P-loop containing nucleoside triphosphate hydrolases"/>
    <property type="match status" value="1"/>
</dbReference>
<dbReference type="SUPFAM" id="SSF50447">
    <property type="entry name" value="Translation proteins"/>
    <property type="match status" value="1"/>
</dbReference>
<dbReference type="PROSITE" id="PS00301">
    <property type="entry name" value="G_TR_1"/>
    <property type="match status" value="1"/>
</dbReference>
<dbReference type="PROSITE" id="PS51722">
    <property type="entry name" value="G_TR_2"/>
    <property type="match status" value="1"/>
</dbReference>
<proteinExistence type="inferred from homology"/>
<comment type="function">
    <text evidence="1">Required for accurate and efficient protein synthesis under certain stress conditions. May act as a fidelity factor of the translation reaction, by catalyzing a one-codon backward translocation of tRNAs on improperly translocated ribosomes. Back-translocation proceeds from a post-translocation (POST) complex to a pre-translocation (PRE) complex, thus giving elongation factor G a second chance to translocate the tRNAs correctly. Binds to ribosomes in a GTP-dependent manner.</text>
</comment>
<comment type="catalytic activity">
    <reaction evidence="1">
        <text>GTP + H2O = GDP + phosphate + H(+)</text>
        <dbReference type="Rhea" id="RHEA:19669"/>
        <dbReference type="ChEBI" id="CHEBI:15377"/>
        <dbReference type="ChEBI" id="CHEBI:15378"/>
        <dbReference type="ChEBI" id="CHEBI:37565"/>
        <dbReference type="ChEBI" id="CHEBI:43474"/>
        <dbReference type="ChEBI" id="CHEBI:58189"/>
        <dbReference type="EC" id="3.6.5.n1"/>
    </reaction>
</comment>
<comment type="subcellular location">
    <subcellularLocation>
        <location evidence="1">Cell membrane</location>
        <topology evidence="1">Peripheral membrane protein</topology>
        <orientation evidence="1">Cytoplasmic side</orientation>
    </subcellularLocation>
</comment>
<comment type="similarity">
    <text evidence="1">Belongs to the TRAFAC class translation factor GTPase superfamily. Classic translation factor GTPase family. LepA subfamily.</text>
</comment>
<feature type="chain" id="PRO_0000176369" description="Elongation factor 4">
    <location>
        <begin position="1"/>
        <end position="599"/>
    </location>
</feature>
<feature type="domain" description="tr-type G">
    <location>
        <begin position="4"/>
        <end position="186"/>
    </location>
</feature>
<feature type="binding site" evidence="1">
    <location>
        <begin position="16"/>
        <end position="21"/>
    </location>
    <ligand>
        <name>GTP</name>
        <dbReference type="ChEBI" id="CHEBI:37565"/>
    </ligand>
</feature>
<feature type="binding site" evidence="1">
    <location>
        <begin position="133"/>
        <end position="136"/>
    </location>
    <ligand>
        <name>GTP</name>
        <dbReference type="ChEBI" id="CHEBI:37565"/>
    </ligand>
</feature>
<protein>
    <recommendedName>
        <fullName evidence="1">Elongation factor 4</fullName>
        <shortName evidence="1">EF-4</shortName>
        <ecNumber evidence="1">3.6.5.n1</ecNumber>
    </recommendedName>
    <alternativeName>
        <fullName evidence="1">Ribosomal back-translocase LepA</fullName>
    </alternativeName>
</protein>
<sequence>MDKKFIRNFSIIAHIDHGKSTLSDRIIEFTNTLSKREMTNQILDSMDIERERGITIKLNAVQIKYHAKDKHEYLIHLIDTPGHVDFTYEVSRSLAACEGAILVVDAAQGIEAQTLSNVYLALENNLEIVPTINKIDLPSADPNRVKKEIEDVIGLDTADVPLISAKTGLNIQDVLEAIIKHVPPPLDAKDDAKLQALIFDSFYDSYKGVVCLVRVKQGTIKVGDKIRMMANNKDYIVSELGIRTPKIVNKTELVAGEVGWVAAAIKTVKDINVGDTITHTNNPADKPLPGYKKILPMVYCGLYPIDTSQYDDLKEAMAKISLSDAALTYEYETSQALGFGIRCGFLGLLHMDVIRERIAREFNIELILTAPSVIYKIELTNNQEISIDSPAKMPEPTSIKLIKEPFVKLAIITPDNYVGAIMELCQSRRGIYDDLEVIDGTRRKLIYKMPLAEIMYSFFDSLKSITKGYATMDYELIGYQAEKLVKIDIMLNGNKVDALSIIAHRDFAYGKSKIICERLKEVIPKHQFEIPIQASIGSKIIARETIKAVRKDVIAKCYGGDVSRKKKLLEQQKEGKKRLKAIGNVDVPQDAFVKVLSEN</sequence>
<accession>Q9PQG7</accession>
<name>LEPA_UREPA</name>
<gene>
    <name evidence="1" type="primary">lepA</name>
    <name type="ordered locus">UU324</name>
</gene>
<reference key="1">
    <citation type="journal article" date="2000" name="Nature">
        <title>The complete sequence of the mucosal pathogen Ureaplasma urealyticum.</title>
        <authorList>
            <person name="Glass J.I."/>
            <person name="Lefkowitz E.J."/>
            <person name="Glass J.S."/>
            <person name="Heiner C.R."/>
            <person name="Chen E.Y."/>
            <person name="Cassell G.H."/>
        </authorList>
    </citation>
    <scope>NUCLEOTIDE SEQUENCE [LARGE SCALE GENOMIC DNA]</scope>
    <source>
        <strain>ATCC 700970</strain>
    </source>
</reference>
<keyword id="KW-1003">Cell membrane</keyword>
<keyword id="KW-0342">GTP-binding</keyword>
<keyword id="KW-0378">Hydrolase</keyword>
<keyword id="KW-0472">Membrane</keyword>
<keyword id="KW-0547">Nucleotide-binding</keyword>
<keyword id="KW-0648">Protein biosynthesis</keyword>
<keyword id="KW-1185">Reference proteome</keyword>